<sequence>MHALQAKILDPRIGNEFPLPAYATTGSAGLDLRAMLKEDTLLEPGQTLLIPTGLSIYIGDPGLAALILPRSGLGHKHGIVLGNLVGLIDSDYQGELMVSCWNRGHTAFNIAVGERIAQLVLVPVVQAHFELVEAFDESQRGAGGFGHSGSH</sequence>
<proteinExistence type="inferred from homology"/>
<feature type="chain" id="PRO_0000231422" description="Deoxyuridine 5'-triphosphate nucleotidohydrolase">
    <location>
        <begin position="1"/>
        <end position="151"/>
    </location>
</feature>
<feature type="binding site" evidence="1">
    <location>
        <begin position="70"/>
        <end position="72"/>
    </location>
    <ligand>
        <name>substrate</name>
    </ligand>
</feature>
<feature type="binding site" evidence="1">
    <location>
        <position position="83"/>
    </location>
    <ligand>
        <name>substrate</name>
    </ligand>
</feature>
<feature type="binding site" evidence="1">
    <location>
        <begin position="87"/>
        <end position="89"/>
    </location>
    <ligand>
        <name>substrate</name>
    </ligand>
</feature>
<feature type="binding site" evidence="1">
    <location>
        <position position="97"/>
    </location>
    <ligand>
        <name>substrate</name>
    </ligand>
</feature>
<reference key="1">
    <citation type="journal article" date="2005" name="Proc. Natl. Acad. Sci. U.S.A.">
        <title>Comparison of the complete genome sequences of Pseudomonas syringae pv. syringae B728a and pv. tomato DC3000.</title>
        <authorList>
            <person name="Feil H."/>
            <person name="Feil W.S."/>
            <person name="Chain P."/>
            <person name="Larimer F."/>
            <person name="Dibartolo G."/>
            <person name="Copeland A."/>
            <person name="Lykidis A."/>
            <person name="Trong S."/>
            <person name="Nolan M."/>
            <person name="Goltsman E."/>
            <person name="Thiel J."/>
            <person name="Malfatti S."/>
            <person name="Loper J.E."/>
            <person name="Lapidus A."/>
            <person name="Detter J.C."/>
            <person name="Land M."/>
            <person name="Richardson P.M."/>
            <person name="Kyrpides N.C."/>
            <person name="Ivanova N."/>
            <person name="Lindow S.E."/>
        </authorList>
    </citation>
    <scope>NUCLEOTIDE SEQUENCE [LARGE SCALE GENOMIC DNA]</scope>
    <source>
        <strain>B728a</strain>
    </source>
</reference>
<comment type="function">
    <text evidence="1">This enzyme is involved in nucleotide metabolism: it produces dUMP, the immediate precursor of thymidine nucleotides and it decreases the intracellular concentration of dUTP so that uracil cannot be incorporated into DNA.</text>
</comment>
<comment type="catalytic activity">
    <reaction evidence="1">
        <text>dUTP + H2O = dUMP + diphosphate + H(+)</text>
        <dbReference type="Rhea" id="RHEA:10248"/>
        <dbReference type="ChEBI" id="CHEBI:15377"/>
        <dbReference type="ChEBI" id="CHEBI:15378"/>
        <dbReference type="ChEBI" id="CHEBI:33019"/>
        <dbReference type="ChEBI" id="CHEBI:61555"/>
        <dbReference type="ChEBI" id="CHEBI:246422"/>
        <dbReference type="EC" id="3.6.1.23"/>
    </reaction>
</comment>
<comment type="cofactor">
    <cofactor evidence="1">
        <name>Mg(2+)</name>
        <dbReference type="ChEBI" id="CHEBI:18420"/>
    </cofactor>
</comment>
<comment type="pathway">
    <text evidence="1">Pyrimidine metabolism; dUMP biosynthesis; dUMP from dCTP (dUTP route): step 2/2.</text>
</comment>
<comment type="similarity">
    <text evidence="1">Belongs to the dUTPase family.</text>
</comment>
<evidence type="ECO:0000255" key="1">
    <source>
        <dbReference type="HAMAP-Rule" id="MF_00116"/>
    </source>
</evidence>
<name>DUT_PSEU2</name>
<protein>
    <recommendedName>
        <fullName evidence="1">Deoxyuridine 5'-triphosphate nucleotidohydrolase</fullName>
        <shortName evidence="1">dUTPase</shortName>
        <ecNumber evidence="1">3.6.1.23</ecNumber>
    </recommendedName>
    <alternativeName>
        <fullName evidence="1">dUTP pyrophosphatase</fullName>
    </alternativeName>
</protein>
<gene>
    <name evidence="1" type="primary">dut</name>
    <name type="ordered locus">Psyr_0220</name>
</gene>
<dbReference type="EC" id="3.6.1.23" evidence="1"/>
<dbReference type="EMBL" id="CP000075">
    <property type="protein sequence ID" value="AAY35293.1"/>
    <property type="molecule type" value="Genomic_DNA"/>
</dbReference>
<dbReference type="RefSeq" id="WP_011266259.1">
    <property type="nucleotide sequence ID" value="NC_007005.1"/>
</dbReference>
<dbReference type="RefSeq" id="YP_233331.1">
    <property type="nucleotide sequence ID" value="NC_007005.1"/>
</dbReference>
<dbReference type="SMR" id="Q4ZZX9"/>
<dbReference type="STRING" id="205918.Psyr_0220"/>
<dbReference type="KEGG" id="psb:Psyr_0220"/>
<dbReference type="PATRIC" id="fig|205918.7.peg.218"/>
<dbReference type="eggNOG" id="COG0756">
    <property type="taxonomic scope" value="Bacteria"/>
</dbReference>
<dbReference type="HOGENOM" id="CLU_068508_1_1_6"/>
<dbReference type="OrthoDB" id="9809956at2"/>
<dbReference type="UniPathway" id="UPA00610">
    <property type="reaction ID" value="UER00666"/>
</dbReference>
<dbReference type="Proteomes" id="UP000000426">
    <property type="component" value="Chromosome"/>
</dbReference>
<dbReference type="GO" id="GO:0004170">
    <property type="term" value="F:dUTP diphosphatase activity"/>
    <property type="evidence" value="ECO:0007669"/>
    <property type="project" value="UniProtKB-UniRule"/>
</dbReference>
<dbReference type="GO" id="GO:0000287">
    <property type="term" value="F:magnesium ion binding"/>
    <property type="evidence" value="ECO:0007669"/>
    <property type="project" value="UniProtKB-UniRule"/>
</dbReference>
<dbReference type="GO" id="GO:0006226">
    <property type="term" value="P:dUMP biosynthetic process"/>
    <property type="evidence" value="ECO:0007669"/>
    <property type="project" value="UniProtKB-UniRule"/>
</dbReference>
<dbReference type="GO" id="GO:0046081">
    <property type="term" value="P:dUTP catabolic process"/>
    <property type="evidence" value="ECO:0007669"/>
    <property type="project" value="InterPro"/>
</dbReference>
<dbReference type="CDD" id="cd07557">
    <property type="entry name" value="trimeric_dUTPase"/>
    <property type="match status" value="1"/>
</dbReference>
<dbReference type="FunFam" id="2.70.40.10:FF:000002">
    <property type="entry name" value="dUTP diphosphatase"/>
    <property type="match status" value="1"/>
</dbReference>
<dbReference type="Gene3D" id="2.70.40.10">
    <property type="match status" value="1"/>
</dbReference>
<dbReference type="HAMAP" id="MF_00116">
    <property type="entry name" value="dUTPase_bact"/>
    <property type="match status" value="1"/>
</dbReference>
<dbReference type="InterPro" id="IPR008181">
    <property type="entry name" value="dUTPase"/>
</dbReference>
<dbReference type="InterPro" id="IPR029054">
    <property type="entry name" value="dUTPase-like"/>
</dbReference>
<dbReference type="InterPro" id="IPR036157">
    <property type="entry name" value="dUTPase-like_sf"/>
</dbReference>
<dbReference type="InterPro" id="IPR033704">
    <property type="entry name" value="dUTPase_trimeric"/>
</dbReference>
<dbReference type="NCBIfam" id="TIGR00576">
    <property type="entry name" value="dut"/>
    <property type="match status" value="1"/>
</dbReference>
<dbReference type="NCBIfam" id="NF001862">
    <property type="entry name" value="PRK00601.1"/>
    <property type="match status" value="1"/>
</dbReference>
<dbReference type="PANTHER" id="PTHR11241">
    <property type="entry name" value="DEOXYURIDINE 5'-TRIPHOSPHATE NUCLEOTIDOHYDROLASE"/>
    <property type="match status" value="1"/>
</dbReference>
<dbReference type="PANTHER" id="PTHR11241:SF0">
    <property type="entry name" value="DEOXYURIDINE 5'-TRIPHOSPHATE NUCLEOTIDOHYDROLASE"/>
    <property type="match status" value="1"/>
</dbReference>
<dbReference type="Pfam" id="PF00692">
    <property type="entry name" value="dUTPase"/>
    <property type="match status" value="1"/>
</dbReference>
<dbReference type="SUPFAM" id="SSF51283">
    <property type="entry name" value="dUTPase-like"/>
    <property type="match status" value="1"/>
</dbReference>
<organism>
    <name type="scientific">Pseudomonas syringae pv. syringae (strain B728a)</name>
    <dbReference type="NCBI Taxonomy" id="205918"/>
    <lineage>
        <taxon>Bacteria</taxon>
        <taxon>Pseudomonadati</taxon>
        <taxon>Pseudomonadota</taxon>
        <taxon>Gammaproteobacteria</taxon>
        <taxon>Pseudomonadales</taxon>
        <taxon>Pseudomonadaceae</taxon>
        <taxon>Pseudomonas</taxon>
        <taxon>Pseudomonas syringae</taxon>
    </lineage>
</organism>
<keyword id="KW-0378">Hydrolase</keyword>
<keyword id="KW-0460">Magnesium</keyword>
<keyword id="KW-0479">Metal-binding</keyword>
<keyword id="KW-0546">Nucleotide metabolism</keyword>
<accession>Q4ZZX9</accession>